<organismHost>
    <name type="scientific">Escherichia coli</name>
    <dbReference type="NCBI Taxonomy" id="562"/>
</organismHost>
<sequence length="65" mass="7740">MDDILVTSDLTSRYKISRKTLWSWQSADTMPRGFVCPFPPPDWPGNPNRWRSESIKEWEDKKKIN</sequence>
<proteinExistence type="predicted"/>
<protein>
    <recommendedName>
        <fullName>Excisionase</fullName>
    </recommendedName>
</protein>
<keyword id="KW-0233">DNA recombination</keyword>
<keyword id="KW-0238">DNA-binding</keyword>
<keyword id="KW-1250">Viral genome excision</keyword>
<name>VXIS_BPPH8</name>
<comment type="function">
    <text>Excisionase and integrase are necessary for the excision of prophage from the host genome by site-specific recombination at the att site.</text>
</comment>
<gene>
    <name type="primary">xis</name>
</gene>
<accession>P05998</accession>
<dbReference type="EMBL" id="X04051">
    <property type="protein sequence ID" value="CAA27684.1"/>
    <property type="molecule type" value="Genomic_DNA"/>
</dbReference>
<dbReference type="PIR" id="B24253">
    <property type="entry name" value="RSBPX8"/>
</dbReference>
<dbReference type="RefSeq" id="YP_007947955.1">
    <property type="nucleotide sequence ID" value="NC_021190.1"/>
</dbReference>
<dbReference type="SMR" id="P05998"/>
<dbReference type="GeneID" id="24366465"/>
<dbReference type="KEGG" id="vg:24366465"/>
<dbReference type="OrthoDB" id="24995at10239"/>
<dbReference type="GO" id="GO:0003677">
    <property type="term" value="F:DNA binding"/>
    <property type="evidence" value="ECO:0007669"/>
    <property type="project" value="UniProtKB-KW"/>
</dbReference>
<dbReference type="GO" id="GO:0006310">
    <property type="term" value="P:DNA recombination"/>
    <property type="evidence" value="ECO:0007669"/>
    <property type="project" value="UniProtKB-KW"/>
</dbReference>
<dbReference type="GO" id="GO:0032359">
    <property type="term" value="P:provirus excision"/>
    <property type="evidence" value="ECO:0007669"/>
    <property type="project" value="UniProtKB-KW"/>
</dbReference>
<organism>
    <name type="scientific">Enterobacteria phage phi80</name>
    <name type="common">Bacteriophage phi-80</name>
    <dbReference type="NCBI Taxonomy" id="10713"/>
    <lineage>
        <taxon>Viruses</taxon>
        <taxon>Duplodnaviria</taxon>
        <taxon>Heunggongvirae</taxon>
        <taxon>Uroviricota</taxon>
        <taxon>Caudoviricetes</taxon>
    </lineage>
</organism>
<evidence type="ECO:0000256" key="1">
    <source>
        <dbReference type="SAM" id="MobiDB-lite"/>
    </source>
</evidence>
<feature type="chain" id="PRO_0000077718" description="Excisionase">
    <location>
        <begin position="1"/>
        <end position="65"/>
    </location>
</feature>
<feature type="region of interest" description="Disordered" evidence="1">
    <location>
        <begin position="45"/>
        <end position="65"/>
    </location>
</feature>
<feature type="compositionally biased region" description="Basic and acidic residues" evidence="1">
    <location>
        <begin position="50"/>
        <end position="65"/>
    </location>
</feature>
<reference key="1">
    <citation type="journal article" date="1986" name="J. Mol. Biol.">
        <title>Structural and regulatory divergence among site-specific recombination genes of lambdoid phage.</title>
        <authorList>
            <person name="Leong J.M."/>
            <person name="Nunes-Dueby S.E."/>
            <person name="Oser A.B."/>
            <person name="Lesser C.F."/>
            <person name="Youderian P."/>
            <person name="Susskind M.M."/>
            <person name="Landy A."/>
        </authorList>
    </citation>
    <scope>NUCLEOTIDE SEQUENCE [GENOMIC DNA]</scope>
</reference>